<reference key="1">
    <citation type="journal article" date="1995" name="Yeast">
        <title>A 37.5 kb region of yeast chromosome X includes the SME1, MEF2, GSH1 and CSD3 genes, a TCP-1-related gene, an open reading frame similar to the DAL80 gene, and a tRNA(Arg).</title>
        <authorList>
            <person name="Rasmussen S.W."/>
        </authorList>
    </citation>
    <scope>NUCLEOTIDE SEQUENCE [GENOMIC DNA]</scope>
    <source>
        <strain>ATCC 96604 / S288c / FY1679</strain>
    </source>
</reference>
<reference key="2">
    <citation type="journal article" date="1996" name="EMBO J.">
        <title>Complete nucleotide sequence of Saccharomyces cerevisiae chromosome X.</title>
        <authorList>
            <person name="Galibert F."/>
            <person name="Alexandraki D."/>
            <person name="Baur A."/>
            <person name="Boles E."/>
            <person name="Chalwatzis N."/>
            <person name="Chuat J.-C."/>
            <person name="Coster F."/>
            <person name="Cziepluch C."/>
            <person name="de Haan M."/>
            <person name="Domdey H."/>
            <person name="Durand P."/>
            <person name="Entian K.-D."/>
            <person name="Gatius M."/>
            <person name="Goffeau A."/>
            <person name="Grivell L.A."/>
            <person name="Hennemann A."/>
            <person name="Herbert C.J."/>
            <person name="Heumann K."/>
            <person name="Hilger F."/>
            <person name="Hollenberg C.P."/>
            <person name="Huang M.-E."/>
            <person name="Jacq C."/>
            <person name="Jauniaux J.-C."/>
            <person name="Katsoulou C."/>
            <person name="Kirchrath L."/>
            <person name="Kleine K."/>
            <person name="Kordes E."/>
            <person name="Koetter P."/>
            <person name="Liebl S."/>
            <person name="Louis E.J."/>
            <person name="Manus V."/>
            <person name="Mewes H.-W."/>
            <person name="Miosga T."/>
            <person name="Obermaier B."/>
            <person name="Perea J."/>
            <person name="Pohl T.M."/>
            <person name="Portetelle D."/>
            <person name="Pujol A."/>
            <person name="Purnelle B."/>
            <person name="Ramezani Rad M."/>
            <person name="Rasmussen S.W."/>
            <person name="Rose M."/>
            <person name="Rossau R."/>
            <person name="Schaaff-Gerstenschlaeger I."/>
            <person name="Smits P.H.M."/>
            <person name="Scarcez T."/>
            <person name="Soriano N."/>
            <person name="To Van D."/>
            <person name="Tzermia M."/>
            <person name="Van Broekhoven A."/>
            <person name="Vandenbol M."/>
            <person name="Wedler H."/>
            <person name="von Wettstein D."/>
            <person name="Wambutt R."/>
            <person name="Zagulski M."/>
            <person name="Zollner A."/>
            <person name="Karpfinger-Hartl L."/>
        </authorList>
    </citation>
    <scope>NUCLEOTIDE SEQUENCE [LARGE SCALE GENOMIC DNA]</scope>
    <source>
        <strain>ATCC 204508 / S288c</strain>
    </source>
</reference>
<reference key="3">
    <citation type="journal article" date="2014" name="G3 (Bethesda)">
        <title>The reference genome sequence of Saccharomyces cerevisiae: Then and now.</title>
        <authorList>
            <person name="Engel S.R."/>
            <person name="Dietrich F.S."/>
            <person name="Fisk D.G."/>
            <person name="Binkley G."/>
            <person name="Balakrishnan R."/>
            <person name="Costanzo M.C."/>
            <person name="Dwight S.S."/>
            <person name="Hitz B.C."/>
            <person name="Karra K."/>
            <person name="Nash R.S."/>
            <person name="Weng S."/>
            <person name="Wong E.D."/>
            <person name="Lloyd P."/>
            <person name="Skrzypek M.S."/>
            <person name="Miyasato S.R."/>
            <person name="Simison M."/>
            <person name="Cherry J.M."/>
        </authorList>
    </citation>
    <scope>GENOME REANNOTATION</scope>
    <source>
        <strain>ATCC 204508 / S288c</strain>
    </source>
</reference>
<dbReference type="EMBL" id="X85021">
    <property type="protein sequence ID" value="CAA59389.1"/>
    <property type="molecule type" value="Genomic_DNA"/>
</dbReference>
<dbReference type="EMBL" id="Z49380">
    <property type="protein sequence ID" value="CAA89400.1"/>
    <property type="molecule type" value="Genomic_DNA"/>
</dbReference>
<dbReference type="EMBL" id="BK006943">
    <property type="protein sequence ID" value="DAA08695.1"/>
    <property type="molecule type" value="Genomic_DNA"/>
</dbReference>
<dbReference type="PIR" id="S53382">
    <property type="entry name" value="S53382"/>
</dbReference>
<dbReference type="RefSeq" id="NP_012430.1">
    <property type="nucleotide sequence ID" value="NM_001181538.1"/>
</dbReference>
<dbReference type="SMR" id="P42948"/>
<dbReference type="BioGRID" id="33651">
    <property type="interactions" value="106"/>
</dbReference>
<dbReference type="FunCoup" id="P42948">
    <property type="interactions" value="87"/>
</dbReference>
<dbReference type="MINT" id="P42948"/>
<dbReference type="STRING" id="4932.YJL105W"/>
<dbReference type="CarbonylDB" id="P42948"/>
<dbReference type="GlyGen" id="P42948">
    <property type="glycosylation" value="1 site"/>
</dbReference>
<dbReference type="PaxDb" id="4932-YJL105W"/>
<dbReference type="PeptideAtlas" id="P42948"/>
<dbReference type="EnsemblFungi" id="YJL105W_mRNA">
    <property type="protein sequence ID" value="YJL105W"/>
    <property type="gene ID" value="YJL105W"/>
</dbReference>
<dbReference type="GeneID" id="853339"/>
<dbReference type="KEGG" id="sce:YJL105W"/>
<dbReference type="AGR" id="SGD:S000003641"/>
<dbReference type="SGD" id="S000003641">
    <property type="gene designation" value="SET4"/>
</dbReference>
<dbReference type="VEuPathDB" id="FungiDB:YJL105W"/>
<dbReference type="eggNOG" id="KOG1844">
    <property type="taxonomic scope" value="Eukaryota"/>
</dbReference>
<dbReference type="GeneTree" id="ENSGT00940000168747"/>
<dbReference type="HOGENOM" id="CLU_017047_1_0_1"/>
<dbReference type="InParanoid" id="P42948"/>
<dbReference type="OMA" id="NTIMHNC"/>
<dbReference type="OrthoDB" id="20872at2759"/>
<dbReference type="BioCyc" id="YEAST:G3O-31559-MONOMER"/>
<dbReference type="BioGRID-ORCS" id="853339">
    <property type="hits" value="0 hits in 10 CRISPR screens"/>
</dbReference>
<dbReference type="PRO" id="PR:P42948"/>
<dbReference type="Proteomes" id="UP000002311">
    <property type="component" value="Chromosome X"/>
</dbReference>
<dbReference type="RNAct" id="P42948">
    <property type="molecule type" value="protein"/>
</dbReference>
<dbReference type="GO" id="GO:0070210">
    <property type="term" value="C:Rpd3L-Expanded complex"/>
    <property type="evidence" value="ECO:0000318"/>
    <property type="project" value="GO_Central"/>
</dbReference>
<dbReference type="GO" id="GO:0034967">
    <property type="term" value="C:Set3 complex"/>
    <property type="evidence" value="ECO:0000318"/>
    <property type="project" value="GO_Central"/>
</dbReference>
<dbReference type="GO" id="GO:0035064">
    <property type="term" value="F:methylated histone binding"/>
    <property type="evidence" value="ECO:0000318"/>
    <property type="project" value="GO_Central"/>
</dbReference>
<dbReference type="GO" id="GO:0008270">
    <property type="term" value="F:zinc ion binding"/>
    <property type="evidence" value="ECO:0007669"/>
    <property type="project" value="UniProtKB-KW"/>
</dbReference>
<dbReference type="GO" id="GO:0006338">
    <property type="term" value="P:chromatin remodeling"/>
    <property type="evidence" value="ECO:0000314"/>
    <property type="project" value="SGD"/>
</dbReference>
<dbReference type="GO" id="GO:1900407">
    <property type="term" value="P:regulation of cellular response to oxidative stress"/>
    <property type="evidence" value="ECO:0000315"/>
    <property type="project" value="SGD"/>
</dbReference>
<dbReference type="GO" id="GO:0006355">
    <property type="term" value="P:regulation of DNA-templated transcription"/>
    <property type="evidence" value="ECO:0000318"/>
    <property type="project" value="GO_Central"/>
</dbReference>
<dbReference type="CDD" id="cd19183">
    <property type="entry name" value="SET_SpSET3-like"/>
    <property type="match status" value="1"/>
</dbReference>
<dbReference type="Gene3D" id="2.170.270.10">
    <property type="entry name" value="SET domain"/>
    <property type="match status" value="1"/>
</dbReference>
<dbReference type="Gene3D" id="3.30.40.10">
    <property type="entry name" value="Zinc/RING finger domain, C3HC4 (zinc finger)"/>
    <property type="match status" value="1"/>
</dbReference>
<dbReference type="InterPro" id="IPR044435">
    <property type="entry name" value="Set3/4_SET"/>
</dbReference>
<dbReference type="InterPro" id="IPR001214">
    <property type="entry name" value="SET_dom"/>
</dbReference>
<dbReference type="InterPro" id="IPR046341">
    <property type="entry name" value="SET_dom_sf"/>
</dbReference>
<dbReference type="InterPro" id="IPR019786">
    <property type="entry name" value="Zinc_finger_PHD-type_CS"/>
</dbReference>
<dbReference type="InterPro" id="IPR011011">
    <property type="entry name" value="Znf_FYVE_PHD"/>
</dbReference>
<dbReference type="InterPro" id="IPR001965">
    <property type="entry name" value="Znf_PHD"/>
</dbReference>
<dbReference type="InterPro" id="IPR019787">
    <property type="entry name" value="Znf_PHD-finger"/>
</dbReference>
<dbReference type="InterPro" id="IPR013083">
    <property type="entry name" value="Znf_RING/FYVE/PHD"/>
</dbReference>
<dbReference type="PANTHER" id="PTHR46462">
    <property type="entry name" value="UPSET, ISOFORM A"/>
    <property type="match status" value="1"/>
</dbReference>
<dbReference type="PANTHER" id="PTHR46462:SF3">
    <property type="entry name" value="UPSET, ISOFORM A"/>
    <property type="match status" value="1"/>
</dbReference>
<dbReference type="Pfam" id="PF00628">
    <property type="entry name" value="PHD"/>
    <property type="match status" value="1"/>
</dbReference>
<dbReference type="Pfam" id="PF00856">
    <property type="entry name" value="SET"/>
    <property type="match status" value="1"/>
</dbReference>
<dbReference type="SMART" id="SM00249">
    <property type="entry name" value="PHD"/>
    <property type="match status" value="1"/>
</dbReference>
<dbReference type="SMART" id="SM00317">
    <property type="entry name" value="SET"/>
    <property type="match status" value="1"/>
</dbReference>
<dbReference type="SUPFAM" id="SSF57903">
    <property type="entry name" value="FYVE/PHD zinc finger"/>
    <property type="match status" value="1"/>
</dbReference>
<dbReference type="SUPFAM" id="SSF82199">
    <property type="entry name" value="SET domain"/>
    <property type="match status" value="1"/>
</dbReference>
<dbReference type="PROSITE" id="PS50280">
    <property type="entry name" value="SET"/>
    <property type="match status" value="1"/>
</dbReference>
<dbReference type="PROSITE" id="PS01359">
    <property type="entry name" value="ZF_PHD_1"/>
    <property type="match status" value="1"/>
</dbReference>
<dbReference type="PROSITE" id="PS50016">
    <property type="entry name" value="ZF_PHD_2"/>
    <property type="match status" value="1"/>
</dbReference>
<proteinExistence type="inferred from homology"/>
<name>SET4_YEAST</name>
<gene>
    <name type="primary">SET4</name>
    <name type="ordered locus">YJL105W</name>
    <name type="ORF">J0819</name>
</gene>
<protein>
    <recommendedName>
        <fullName>SET domain-containing protein 4</fullName>
    </recommendedName>
</protein>
<evidence type="ECO:0000255" key="1">
    <source>
        <dbReference type="PROSITE-ProRule" id="PRU00146"/>
    </source>
</evidence>
<evidence type="ECO:0000255" key="2">
    <source>
        <dbReference type="PROSITE-ProRule" id="PRU00190"/>
    </source>
</evidence>
<evidence type="ECO:0000256" key="3">
    <source>
        <dbReference type="SAM" id="MobiDB-lite"/>
    </source>
</evidence>
<evidence type="ECO:0000305" key="4"/>
<feature type="chain" id="PRO_0000097697" description="SET domain-containing protein 4">
    <location>
        <begin position="1"/>
        <end position="560"/>
    </location>
</feature>
<feature type="domain" description="SET" evidence="2">
    <location>
        <begin position="346"/>
        <end position="475"/>
    </location>
</feature>
<feature type="zinc finger region" description="PHD-type" evidence="1">
    <location>
        <begin position="160"/>
        <end position="210"/>
    </location>
</feature>
<feature type="region of interest" description="Disordered" evidence="3">
    <location>
        <begin position="1"/>
        <end position="61"/>
    </location>
</feature>
<feature type="region of interest" description="Disordered" evidence="3">
    <location>
        <begin position="125"/>
        <end position="157"/>
    </location>
</feature>
<feature type="compositionally biased region" description="Low complexity" evidence="3">
    <location>
        <begin position="26"/>
        <end position="38"/>
    </location>
</feature>
<feature type="compositionally biased region" description="Polar residues" evidence="3">
    <location>
        <begin position="47"/>
        <end position="59"/>
    </location>
</feature>
<feature type="compositionally biased region" description="Basic and acidic residues" evidence="3">
    <location>
        <begin position="141"/>
        <end position="157"/>
    </location>
</feature>
<organism>
    <name type="scientific">Saccharomyces cerevisiae (strain ATCC 204508 / S288c)</name>
    <name type="common">Baker's yeast</name>
    <dbReference type="NCBI Taxonomy" id="559292"/>
    <lineage>
        <taxon>Eukaryota</taxon>
        <taxon>Fungi</taxon>
        <taxon>Dikarya</taxon>
        <taxon>Ascomycota</taxon>
        <taxon>Saccharomycotina</taxon>
        <taxon>Saccharomycetes</taxon>
        <taxon>Saccharomycetales</taxon>
        <taxon>Saccharomycetaceae</taxon>
        <taxon>Saccharomyces</taxon>
    </lineage>
</organism>
<keyword id="KW-0156">Chromatin regulator</keyword>
<keyword id="KW-0479">Metal-binding</keyword>
<keyword id="KW-1185">Reference proteome</keyword>
<keyword id="KW-0862">Zinc</keyword>
<keyword id="KW-0863">Zinc-finger</keyword>
<comment type="function">
    <text>Putative chromatin regulator.</text>
</comment>
<comment type="similarity">
    <text evidence="4">Belongs to the SET3 family.</text>
</comment>
<sequence length="560" mass="63856">MTSPESLSSRHIRQGRTYTTTDKVISRSSSYSSNSSMSKDYGDHTPLSVSSAASETLPSPQYMPIRTFNTMPTAGPTPLHLFQNDRGIFNHHSSSGSSKTASTNKRGIAAAVALATAATIPFPLKKQNQDDNSKVSVTHNESSKENKITPSMRAEDNKPKNGCICGSSDSKDELFIQCNKCKTWQHKLCYAFKKSDPIKRDFVCKRCDSDTKVQVNQVKPMIFPRKMGDERLFQFSSIVTTSASNTNQHQQSVNNIEEQPKKRQLHYTAPTTENSNSIRKKLRQEKLVVSSHFLKPLLNEVSSSNDTEFKAITISEYKDKYVKMFIDNHYDDDWVVCSNWESSRSADIEVRKSSNERDFGVFAADSCVKGELIQEYLGKIDFQKNYQTDPNNDYRLMGTTKPKVLFHPHWPLYIDSRETGGLTRYIRRSCEPNVELVTVRPLDEKPRGDNDCRVKFVLRAIRDIRKGEEISVEWQWDLRNPIWEIINASKDLDSLPDPDKFWLMGSIKTILTNCDCACGYLGHNCPITKIKNFSEEFMRNTKESLSNKSYFNTIMHNCKP</sequence>
<accession>P42948</accession>
<accession>D6VW79</accession>